<evidence type="ECO:0000250" key="1">
    <source>
        <dbReference type="UniProtKB" id="Q9NYZ3"/>
    </source>
</evidence>
<evidence type="ECO:0000256" key="2">
    <source>
        <dbReference type="SAM" id="MobiDB-lite"/>
    </source>
</evidence>
<evidence type="ECO:0000269" key="3">
    <source>
    </source>
</evidence>
<evidence type="ECO:0000305" key="4"/>
<evidence type="ECO:0007744" key="5">
    <source>
    </source>
</evidence>
<evidence type="ECO:0007744" key="6">
    <source>
    </source>
</evidence>
<comment type="function">
    <text>May be involved in p53-induced cell cycle arrest in G2/M phase by interfering with microtubule rearrangements that are required to enter mitosis. Overexpression delays G2/M phase progression.</text>
</comment>
<comment type="subcellular location">
    <subcellularLocation>
        <location>Cytoplasm</location>
        <location>Cytoskeleton</location>
    </subcellularLocation>
    <text>Associated with microtubules.</text>
</comment>
<comment type="developmental stage">
    <text evidence="3">Expression begins at S phase, accumulates in late S/G2 phase and disappears in G1 phase.</text>
</comment>
<comment type="induction">
    <text>By p53 when exposed to different DNA damaging agents, including gamma irradiation and chemotherapeutic drugs.</text>
</comment>
<comment type="PTM">
    <text evidence="3">Phosphorylated in mitosis.</text>
</comment>
<keyword id="KW-0963">Cytoplasm</keyword>
<keyword id="KW-0206">Cytoskeleton</keyword>
<keyword id="KW-0493">Microtubule</keyword>
<keyword id="KW-0597">Phosphoprotein</keyword>
<keyword id="KW-1185">Reference proteome</keyword>
<reference key="1">
    <citation type="journal article" date="1998" name="EMBO J.">
        <title>A novel p53-inducible gene coding for a microtubule-localized protein with G2-phase-specific expression.</title>
        <authorList>
            <person name="Utrera R."/>
            <person name="Collavin L."/>
            <person name="Lazarevic D."/>
            <person name="Delia D."/>
            <person name="Schneider C."/>
        </authorList>
    </citation>
    <scope>NUCLEOTIDE SEQUENCE [MRNA]</scope>
</reference>
<reference key="2">
    <citation type="journal article" date="2004" name="Genome Res.">
        <title>The status, quality, and expansion of the NIH full-length cDNA project: the Mammalian Gene Collection (MGC).</title>
        <authorList>
            <consortium name="The MGC Project Team"/>
        </authorList>
    </citation>
    <scope>NUCLEOTIDE SEQUENCE [LARGE SCALE MRNA]</scope>
    <source>
        <tissue>Mammary gland</tissue>
    </source>
</reference>
<reference key="3">
    <citation type="journal article" date="2005" name="Science">
        <title>The transcriptional landscape of the mammalian genome.</title>
        <authorList>
            <person name="Carninci P."/>
            <person name="Kasukawa T."/>
            <person name="Katayama S."/>
            <person name="Gough J."/>
            <person name="Frith M.C."/>
            <person name="Maeda N."/>
            <person name="Oyama R."/>
            <person name="Ravasi T."/>
            <person name="Lenhard B."/>
            <person name="Wells C."/>
            <person name="Kodzius R."/>
            <person name="Shimokawa K."/>
            <person name="Bajic V.B."/>
            <person name="Brenner S.E."/>
            <person name="Batalov S."/>
            <person name="Forrest A.R."/>
            <person name="Zavolan M."/>
            <person name="Davis M.J."/>
            <person name="Wilming L.G."/>
            <person name="Aidinis V."/>
            <person name="Allen J.E."/>
            <person name="Ambesi-Impiombato A."/>
            <person name="Apweiler R."/>
            <person name="Aturaliya R.N."/>
            <person name="Bailey T.L."/>
            <person name="Bansal M."/>
            <person name="Baxter L."/>
            <person name="Beisel K.W."/>
            <person name="Bersano T."/>
            <person name="Bono H."/>
            <person name="Chalk A.M."/>
            <person name="Chiu K.P."/>
            <person name="Choudhary V."/>
            <person name="Christoffels A."/>
            <person name="Clutterbuck D.R."/>
            <person name="Crowe M.L."/>
            <person name="Dalla E."/>
            <person name="Dalrymple B.P."/>
            <person name="de Bono B."/>
            <person name="Della Gatta G."/>
            <person name="di Bernardo D."/>
            <person name="Down T."/>
            <person name="Engstrom P."/>
            <person name="Fagiolini M."/>
            <person name="Faulkner G."/>
            <person name="Fletcher C.F."/>
            <person name="Fukushima T."/>
            <person name="Furuno M."/>
            <person name="Futaki S."/>
            <person name="Gariboldi M."/>
            <person name="Georgii-Hemming P."/>
            <person name="Gingeras T.R."/>
            <person name="Gojobori T."/>
            <person name="Green R.E."/>
            <person name="Gustincich S."/>
            <person name="Harbers M."/>
            <person name="Hayashi Y."/>
            <person name="Hensch T.K."/>
            <person name="Hirokawa N."/>
            <person name="Hill D."/>
            <person name="Huminiecki L."/>
            <person name="Iacono M."/>
            <person name="Ikeo K."/>
            <person name="Iwama A."/>
            <person name="Ishikawa T."/>
            <person name="Jakt M."/>
            <person name="Kanapin A."/>
            <person name="Katoh M."/>
            <person name="Kawasawa Y."/>
            <person name="Kelso J."/>
            <person name="Kitamura H."/>
            <person name="Kitano H."/>
            <person name="Kollias G."/>
            <person name="Krishnan S.P."/>
            <person name="Kruger A."/>
            <person name="Kummerfeld S.K."/>
            <person name="Kurochkin I.V."/>
            <person name="Lareau L.F."/>
            <person name="Lazarevic D."/>
            <person name="Lipovich L."/>
            <person name="Liu J."/>
            <person name="Liuni S."/>
            <person name="McWilliam S."/>
            <person name="Madan Babu M."/>
            <person name="Madera M."/>
            <person name="Marchionni L."/>
            <person name="Matsuda H."/>
            <person name="Matsuzawa S."/>
            <person name="Miki H."/>
            <person name="Mignone F."/>
            <person name="Miyake S."/>
            <person name="Morris K."/>
            <person name="Mottagui-Tabar S."/>
            <person name="Mulder N."/>
            <person name="Nakano N."/>
            <person name="Nakauchi H."/>
            <person name="Ng P."/>
            <person name="Nilsson R."/>
            <person name="Nishiguchi S."/>
            <person name="Nishikawa S."/>
            <person name="Nori F."/>
            <person name="Ohara O."/>
            <person name="Okazaki Y."/>
            <person name="Orlando V."/>
            <person name="Pang K.C."/>
            <person name="Pavan W.J."/>
            <person name="Pavesi G."/>
            <person name="Pesole G."/>
            <person name="Petrovsky N."/>
            <person name="Piazza S."/>
            <person name="Reed J."/>
            <person name="Reid J.F."/>
            <person name="Ring B.Z."/>
            <person name="Ringwald M."/>
            <person name="Rost B."/>
            <person name="Ruan Y."/>
            <person name="Salzberg S.L."/>
            <person name="Sandelin A."/>
            <person name="Schneider C."/>
            <person name="Schoenbach C."/>
            <person name="Sekiguchi K."/>
            <person name="Semple C.A."/>
            <person name="Seno S."/>
            <person name="Sessa L."/>
            <person name="Sheng Y."/>
            <person name="Shibata Y."/>
            <person name="Shimada H."/>
            <person name="Shimada K."/>
            <person name="Silva D."/>
            <person name="Sinclair B."/>
            <person name="Sperling S."/>
            <person name="Stupka E."/>
            <person name="Sugiura K."/>
            <person name="Sultana R."/>
            <person name="Takenaka Y."/>
            <person name="Taki K."/>
            <person name="Tammoja K."/>
            <person name="Tan S.L."/>
            <person name="Tang S."/>
            <person name="Taylor M.S."/>
            <person name="Tegner J."/>
            <person name="Teichmann S.A."/>
            <person name="Ueda H.R."/>
            <person name="van Nimwegen E."/>
            <person name="Verardo R."/>
            <person name="Wei C.L."/>
            <person name="Yagi K."/>
            <person name="Yamanishi H."/>
            <person name="Zabarovsky E."/>
            <person name="Zhu S."/>
            <person name="Zimmer A."/>
            <person name="Hide W."/>
            <person name="Bult C."/>
            <person name="Grimmond S.M."/>
            <person name="Teasdale R.D."/>
            <person name="Liu E.T."/>
            <person name="Brusic V."/>
            <person name="Quackenbush J."/>
            <person name="Wahlestedt C."/>
            <person name="Mattick J.S."/>
            <person name="Hume D.A."/>
            <person name="Kai C."/>
            <person name="Sasaki D."/>
            <person name="Tomaru Y."/>
            <person name="Fukuda S."/>
            <person name="Kanamori-Katayama M."/>
            <person name="Suzuki M."/>
            <person name="Aoki J."/>
            <person name="Arakawa T."/>
            <person name="Iida J."/>
            <person name="Imamura K."/>
            <person name="Itoh M."/>
            <person name="Kato T."/>
            <person name="Kawaji H."/>
            <person name="Kawagashira N."/>
            <person name="Kawashima T."/>
            <person name="Kojima M."/>
            <person name="Kondo S."/>
            <person name="Konno H."/>
            <person name="Nakano K."/>
            <person name="Ninomiya N."/>
            <person name="Nishio T."/>
            <person name="Okada M."/>
            <person name="Plessy C."/>
            <person name="Shibata K."/>
            <person name="Shiraki T."/>
            <person name="Suzuki S."/>
            <person name="Tagami M."/>
            <person name="Waki K."/>
            <person name="Watahiki A."/>
            <person name="Okamura-Oho Y."/>
            <person name="Suzuki H."/>
            <person name="Kawai J."/>
            <person name="Hayashizaki Y."/>
        </authorList>
    </citation>
    <scope>NUCLEOTIDE SEQUENCE [LARGE SCALE MRNA] OF 1-130</scope>
    <source>
        <strain>C57BL/6J</strain>
        <tissue>Embryo</tissue>
    </source>
</reference>
<reference key="4">
    <citation type="journal article" date="2000" name="FEBS Lett.">
        <title>Cell-cycle regulation of the p53-inducible gene B99.</title>
        <authorList>
            <person name="Collavin L."/>
            <person name="Monte M."/>
            <person name="Verardo R."/>
            <person name="Pfleger C."/>
            <person name="Schneider C."/>
        </authorList>
    </citation>
    <scope>DEVELOPMENTAL STAGE</scope>
    <scope>PHOSPHORYLATION</scope>
</reference>
<reference key="5">
    <citation type="journal article" date="2007" name="Proc. Natl. Acad. Sci. U.S.A.">
        <title>Large-scale phosphorylation analysis of mouse liver.</title>
        <authorList>
            <person name="Villen J."/>
            <person name="Beausoleil S.A."/>
            <person name="Gerber S.A."/>
            <person name="Gygi S.P."/>
        </authorList>
    </citation>
    <scope>IDENTIFICATION BY MASS SPECTROMETRY [LARGE SCALE ANALYSIS]</scope>
    <source>
        <tissue>Liver</tissue>
    </source>
</reference>
<reference key="6">
    <citation type="journal article" date="2009" name="Immunity">
        <title>The phagosomal proteome in interferon-gamma-activated macrophages.</title>
        <authorList>
            <person name="Trost M."/>
            <person name="English L."/>
            <person name="Lemieux S."/>
            <person name="Courcelles M."/>
            <person name="Desjardins M."/>
            <person name="Thibault P."/>
        </authorList>
    </citation>
    <scope>PHOSPHORYLATION [LARGE SCALE ANALYSIS] AT SER-476</scope>
    <scope>IDENTIFICATION BY MASS SPECTROMETRY [LARGE SCALE ANALYSIS]</scope>
</reference>
<reference key="7">
    <citation type="journal article" date="2010" name="Cell">
        <title>A tissue-specific atlas of mouse protein phosphorylation and expression.</title>
        <authorList>
            <person name="Huttlin E.L."/>
            <person name="Jedrychowski M.P."/>
            <person name="Elias J.E."/>
            <person name="Goswami T."/>
            <person name="Rad R."/>
            <person name="Beausoleil S.A."/>
            <person name="Villen J."/>
            <person name="Haas W."/>
            <person name="Sowa M.E."/>
            <person name="Gygi S.P."/>
        </authorList>
    </citation>
    <scope>PHOSPHORYLATION [LARGE SCALE ANALYSIS] AT SER-460 AND THR-465</scope>
    <scope>IDENTIFICATION BY MASS SPECTROMETRY [LARGE SCALE ANALYSIS]</scope>
    <source>
        <tissue>Spleen</tissue>
        <tissue>Testis</tissue>
    </source>
</reference>
<organism>
    <name type="scientific">Mus musculus</name>
    <name type="common">Mouse</name>
    <dbReference type="NCBI Taxonomy" id="10090"/>
    <lineage>
        <taxon>Eukaryota</taxon>
        <taxon>Metazoa</taxon>
        <taxon>Chordata</taxon>
        <taxon>Craniata</taxon>
        <taxon>Vertebrata</taxon>
        <taxon>Euteleostomi</taxon>
        <taxon>Mammalia</taxon>
        <taxon>Eutheria</taxon>
        <taxon>Euarchontoglires</taxon>
        <taxon>Glires</taxon>
        <taxon>Rodentia</taxon>
        <taxon>Myomorpha</taxon>
        <taxon>Muroidea</taxon>
        <taxon>Muridae</taxon>
        <taxon>Murinae</taxon>
        <taxon>Mus</taxon>
        <taxon>Mus</taxon>
    </lineage>
</organism>
<proteinExistence type="evidence at protein level"/>
<gene>
    <name type="primary">Gtse1</name>
    <name type="synonym">B99</name>
</gene>
<name>GTSE1_MOUSE</name>
<protein>
    <recommendedName>
        <fullName>G2 and S phase-expressed protein 1</fullName>
        <shortName>GTSE-1</shortName>
    </recommendedName>
    <alternativeName>
        <fullName>Protein B99</fullName>
    </alternativeName>
</protein>
<dbReference type="EMBL" id="AJ222580">
    <property type="protein sequence ID" value="CAA10848.1"/>
    <property type="molecule type" value="mRNA"/>
</dbReference>
<dbReference type="EMBL" id="BC027213">
    <property type="protein sequence ID" value="AAH27213.1"/>
    <property type="molecule type" value="mRNA"/>
</dbReference>
<dbReference type="EMBL" id="AK012870">
    <property type="protein sequence ID" value="BAB28524.1"/>
    <property type="molecule type" value="mRNA"/>
</dbReference>
<dbReference type="CCDS" id="CCDS27725.1"/>
<dbReference type="RefSeq" id="NP_001162143.1">
    <property type="nucleotide sequence ID" value="NM_001168672.2"/>
</dbReference>
<dbReference type="RefSeq" id="NP_038910.1">
    <property type="nucleotide sequence ID" value="NM_013882.3"/>
</dbReference>
<dbReference type="SMR" id="Q8R080"/>
<dbReference type="BioGRID" id="205935">
    <property type="interactions" value="5"/>
</dbReference>
<dbReference type="FunCoup" id="Q8R080">
    <property type="interactions" value="522"/>
</dbReference>
<dbReference type="IntAct" id="Q8R080">
    <property type="interactions" value="1"/>
</dbReference>
<dbReference type="MINT" id="Q8R080"/>
<dbReference type="STRING" id="10090.ENSMUSP00000155552"/>
<dbReference type="GlyGen" id="Q8R080">
    <property type="glycosylation" value="1 site"/>
</dbReference>
<dbReference type="iPTMnet" id="Q8R080"/>
<dbReference type="PhosphoSitePlus" id="Q8R080"/>
<dbReference type="SwissPalm" id="Q8R080"/>
<dbReference type="jPOST" id="Q8R080"/>
<dbReference type="PaxDb" id="10090-ENSMUSP00000128759"/>
<dbReference type="ProteomicsDB" id="271351"/>
<dbReference type="Pumba" id="Q8R080"/>
<dbReference type="Antibodypedia" id="28047">
    <property type="antibodies" value="263 antibodies from 30 providers"/>
</dbReference>
<dbReference type="DNASU" id="29870"/>
<dbReference type="Ensembl" id="ENSMUST00000170629.3">
    <property type="protein sequence ID" value="ENSMUSP00000128759.2"/>
    <property type="gene ID" value="ENSMUSG00000022385.12"/>
</dbReference>
<dbReference type="Ensembl" id="ENSMUST00000231074.2">
    <property type="protein sequence ID" value="ENSMUSP00000155552.2"/>
    <property type="gene ID" value="ENSMUSG00000022385.12"/>
</dbReference>
<dbReference type="GeneID" id="29870"/>
<dbReference type="KEGG" id="mmu:29870"/>
<dbReference type="UCSC" id="uc007xdp.1">
    <property type="organism name" value="mouse"/>
</dbReference>
<dbReference type="AGR" id="MGI:1352755"/>
<dbReference type="CTD" id="51512"/>
<dbReference type="MGI" id="MGI:1352755">
    <property type="gene designation" value="Gtse1"/>
</dbReference>
<dbReference type="VEuPathDB" id="HostDB:ENSMUSG00000022385"/>
<dbReference type="eggNOG" id="ENOG502QW86">
    <property type="taxonomic scope" value="Eukaryota"/>
</dbReference>
<dbReference type="GeneTree" id="ENSGT00940000154189"/>
<dbReference type="HOGENOM" id="CLU_023558_0_0_1"/>
<dbReference type="InParanoid" id="Q8R080"/>
<dbReference type="OMA" id="MTPKMMP"/>
<dbReference type="OrthoDB" id="10072587at2759"/>
<dbReference type="PhylomeDB" id="Q8R080"/>
<dbReference type="TreeFam" id="TF332555"/>
<dbReference type="Reactome" id="R-MMU-69481">
    <property type="pathway name" value="G2/M Checkpoints"/>
</dbReference>
<dbReference type="Reactome" id="R-MMU-8852276">
    <property type="pathway name" value="The role of GTSE1 in G2/M progression after G2 checkpoint"/>
</dbReference>
<dbReference type="BioGRID-ORCS" id="29870">
    <property type="hits" value="11 hits in 82 CRISPR screens"/>
</dbReference>
<dbReference type="ChiTaRS" id="Gtse1">
    <property type="organism name" value="mouse"/>
</dbReference>
<dbReference type="PRO" id="PR:Q8R080"/>
<dbReference type="Proteomes" id="UP000000589">
    <property type="component" value="Chromosome 15"/>
</dbReference>
<dbReference type="RNAct" id="Q8R080">
    <property type="molecule type" value="protein"/>
</dbReference>
<dbReference type="Bgee" id="ENSMUSG00000022385">
    <property type="expression patterns" value="Expressed in animal zygote and 106 other cell types or tissues"/>
</dbReference>
<dbReference type="ExpressionAtlas" id="Q8R080">
    <property type="expression patterns" value="baseline and differential"/>
</dbReference>
<dbReference type="GO" id="GO:0005881">
    <property type="term" value="C:cytoplasmic microtubule"/>
    <property type="evidence" value="ECO:0007669"/>
    <property type="project" value="Ensembl"/>
</dbReference>
<dbReference type="InterPro" id="IPR026657">
    <property type="entry name" value="DDA3/GTSE-1"/>
</dbReference>
<dbReference type="InterPro" id="IPR032768">
    <property type="entry name" value="GTSE1_N"/>
</dbReference>
<dbReference type="PANTHER" id="PTHR21584">
    <property type="entry name" value="DIFFERENTIAL DISPLAY AND ACTIVATED BY P53 DDA3 /G2 S PHASE EXPRESSED 1"/>
    <property type="match status" value="1"/>
</dbReference>
<dbReference type="PANTHER" id="PTHR21584:SF10">
    <property type="entry name" value="G2 AND S PHASE-EXPRESSED PROTEIN 1"/>
    <property type="match status" value="1"/>
</dbReference>
<dbReference type="Pfam" id="PF15259">
    <property type="entry name" value="GTSE1_N"/>
    <property type="match status" value="1"/>
</dbReference>
<feature type="chain" id="PRO_0000083876" description="G2 and S phase-expressed protein 1">
    <location>
        <begin position="1"/>
        <end position="741"/>
    </location>
</feature>
<feature type="region of interest" description="Disordered" evidence="2">
    <location>
        <begin position="101"/>
        <end position="120"/>
    </location>
</feature>
<feature type="region of interest" description="Disordered" evidence="2">
    <location>
        <begin position="131"/>
        <end position="428"/>
    </location>
</feature>
<feature type="region of interest" description="Disordered" evidence="2">
    <location>
        <begin position="450"/>
        <end position="512"/>
    </location>
</feature>
<feature type="region of interest" description="Disordered" evidence="2">
    <location>
        <begin position="550"/>
        <end position="640"/>
    </location>
</feature>
<feature type="compositionally biased region" description="Polar residues" evidence="2">
    <location>
        <begin position="106"/>
        <end position="120"/>
    </location>
</feature>
<feature type="compositionally biased region" description="Basic and acidic residues" evidence="2">
    <location>
        <begin position="131"/>
        <end position="147"/>
    </location>
</feature>
<feature type="compositionally biased region" description="Polar residues" evidence="2">
    <location>
        <begin position="173"/>
        <end position="209"/>
    </location>
</feature>
<feature type="compositionally biased region" description="Polar residues" evidence="2">
    <location>
        <begin position="246"/>
        <end position="261"/>
    </location>
</feature>
<feature type="compositionally biased region" description="Low complexity" evidence="2">
    <location>
        <begin position="310"/>
        <end position="321"/>
    </location>
</feature>
<feature type="compositionally biased region" description="Polar residues" evidence="2">
    <location>
        <begin position="337"/>
        <end position="355"/>
    </location>
</feature>
<feature type="compositionally biased region" description="Low complexity" evidence="2">
    <location>
        <begin position="360"/>
        <end position="372"/>
    </location>
</feature>
<feature type="compositionally biased region" description="Polar residues" evidence="2">
    <location>
        <begin position="398"/>
        <end position="408"/>
    </location>
</feature>
<feature type="compositionally biased region" description="Low complexity" evidence="2">
    <location>
        <begin position="478"/>
        <end position="497"/>
    </location>
</feature>
<feature type="compositionally biased region" description="Low complexity" evidence="2">
    <location>
        <begin position="578"/>
        <end position="593"/>
    </location>
</feature>
<feature type="modified residue" description="Phosphoserine" evidence="1">
    <location>
        <position position="73"/>
    </location>
</feature>
<feature type="modified residue" description="Phosphoserine" evidence="1">
    <location>
        <position position="139"/>
    </location>
</feature>
<feature type="modified residue" description="Phosphoserine" evidence="1">
    <location>
        <position position="153"/>
    </location>
</feature>
<feature type="modified residue" description="Phosphoserine" evidence="1">
    <location>
        <position position="191"/>
    </location>
</feature>
<feature type="modified residue" description="Phosphoserine" evidence="1">
    <location>
        <position position="245"/>
    </location>
</feature>
<feature type="modified residue" description="Phosphoserine" evidence="1">
    <location>
        <position position="311"/>
    </location>
</feature>
<feature type="modified residue" description="Phosphoserine" evidence="6">
    <location>
        <position position="460"/>
    </location>
</feature>
<feature type="modified residue" description="Phosphothreonine" evidence="6">
    <location>
        <position position="465"/>
    </location>
</feature>
<feature type="modified residue" description="Phosphoserine" evidence="5">
    <location>
        <position position="476"/>
    </location>
</feature>
<feature type="modified residue" description="Phosphoserine" evidence="1">
    <location>
        <position position="493"/>
    </location>
</feature>
<feature type="modified residue" description="Phosphoserine" evidence="1">
    <location>
        <position position="509"/>
    </location>
</feature>
<feature type="modified residue" description="Phosphoserine" evidence="1">
    <location>
        <position position="514"/>
    </location>
</feature>
<feature type="modified residue" description="Phosphothreonine" evidence="1">
    <location>
        <position position="518"/>
    </location>
</feature>
<feature type="modified residue" description="Phosphoserine" evidence="1">
    <location>
        <position position="521"/>
    </location>
</feature>
<feature type="modified residue" description="Phosphoserine" evidence="1">
    <location>
        <position position="541"/>
    </location>
</feature>
<feature type="modified residue" description="Phosphoserine" evidence="1">
    <location>
        <position position="582"/>
    </location>
</feature>
<feature type="modified residue" description="Phosphoserine" evidence="1">
    <location>
        <position position="599"/>
    </location>
</feature>
<feature type="modified residue" description="Phosphothreonine" evidence="1">
    <location>
        <position position="696"/>
    </location>
</feature>
<feature type="modified residue" description="Phosphoserine" evidence="1">
    <location>
        <position position="720"/>
    </location>
</feature>
<feature type="modified residue" description="Phosphoserine" evidence="1">
    <location>
        <position position="726"/>
    </location>
</feature>
<feature type="modified residue" description="Phosphoserine" evidence="1">
    <location>
        <position position="736"/>
    </location>
</feature>
<feature type="sequence conflict" description="In Ref. 2; AAH27213." evidence="4" ref="2">
    <original>S</original>
    <variation>P</variation>
    <location>
        <position position="153"/>
    </location>
</feature>
<feature type="sequence conflict" description="In Ref. 2; AAH27213." evidence="4" ref="2">
    <original>I</original>
    <variation>L</variation>
    <location>
        <position position="246"/>
    </location>
</feature>
<feature type="sequence conflict" description="In Ref. 2; AAH27213." evidence="4" ref="2">
    <original>V</original>
    <variation>M</variation>
    <location>
        <position position="252"/>
    </location>
</feature>
<feature type="sequence conflict" description="In Ref. 2; AAH27213." evidence="4" ref="2">
    <original>S</original>
    <variation>G</variation>
    <location>
        <position position="274"/>
    </location>
</feature>
<feature type="sequence conflict" description="In Ref. 2; AAH27213." evidence="4" ref="2">
    <original>SP</original>
    <variation>IL</variation>
    <location>
        <begin position="398"/>
        <end position="399"/>
    </location>
</feature>
<accession>Q8R080</accession>
<accession>O89015</accession>
<accession>Q9CSG9</accession>
<sequence length="741" mass="78751">MDAGSKKEDFLLLEDEKFDFDLSLSSSSTNEDDEVFFGPVGHKERCIAASLDLNRRVPGQPLAPGSGSPCTLSPLTGEKFVEVYKEAHLLALQIESHSRREVAQAATPQNPVNQGKETFVQDSQLKVSLFEKEQKRDRSPMSLKRETFCLPSSRVQPPMGEPQLLASPGLLSSPVSAGPAQTQSNQGLPCSSQPLPRESSTSQPPSQAGPQKRITSKLQPPRALPVRGRNLHLATEKLKKEVPASIQRTKLVNEKGSQSDVLQDKPSTAPDAASREGHPGKRSLPIPGKLGLKKTLLKPPGYTGNLTRKSSTSGSASSLESGVYRSSVAGKAKSSEQRSSIPASGSQRRTSTSKSGRIGPAASRQALPAAPARVFGRQANKADAAQTVAEQPKVPTLSPLTQQPQTPEQRGPRLDPDTETPQLNKTVSIKRRDSYLSCKTEAVSTTTNPFKVPQFSVGESPGGVTPKFSRTHRLQSWTPASRVVSSTPVRRSSGTTPQGLPGSMRTPLSTRRMSVLPTPASRRLSSLPLMAPQSMPRALVSPLCVPARRLSSEPRRRSTVRAELTQESSGSGSGGQAQGLSSDESSSPPSSVPQALNFSPEKSASPPPQGSSTGAAQGEAEPPEDTLPSEVHGGGCSHTPSEGLLLDLKLDQLTITPEAGGRDLADCPLIDFSNTPESNTALGPSSWPLIDLIMNTPDMGRNDVGKPAKAELGQLIDLGSPLIQLSPEADKENVDSPLLKF</sequence>